<feature type="chain" id="PRO_1000023595" description="Arginine repressor">
    <location>
        <begin position="1"/>
        <end position="156"/>
    </location>
</feature>
<keyword id="KW-0028">Amino-acid biosynthesis</keyword>
<keyword id="KW-0055">Arginine biosynthesis</keyword>
<keyword id="KW-0963">Cytoplasm</keyword>
<keyword id="KW-0238">DNA-binding</keyword>
<keyword id="KW-0678">Repressor</keyword>
<keyword id="KW-0804">Transcription</keyword>
<keyword id="KW-0805">Transcription regulation</keyword>
<accession>Q0HZ39</accession>
<organism>
    <name type="scientific">Shewanella sp. (strain MR-7)</name>
    <dbReference type="NCBI Taxonomy" id="60481"/>
    <lineage>
        <taxon>Bacteria</taxon>
        <taxon>Pseudomonadati</taxon>
        <taxon>Pseudomonadota</taxon>
        <taxon>Gammaproteobacteria</taxon>
        <taxon>Alteromonadales</taxon>
        <taxon>Shewanellaceae</taxon>
        <taxon>Shewanella</taxon>
    </lineage>
</organism>
<reference key="1">
    <citation type="submission" date="2006-08" db="EMBL/GenBank/DDBJ databases">
        <title>Complete sequence of chromosome 1 of Shewanella sp. MR-7.</title>
        <authorList>
            <person name="Copeland A."/>
            <person name="Lucas S."/>
            <person name="Lapidus A."/>
            <person name="Barry K."/>
            <person name="Detter J.C."/>
            <person name="Glavina del Rio T."/>
            <person name="Hammon N."/>
            <person name="Israni S."/>
            <person name="Dalin E."/>
            <person name="Tice H."/>
            <person name="Pitluck S."/>
            <person name="Kiss H."/>
            <person name="Brettin T."/>
            <person name="Bruce D."/>
            <person name="Han C."/>
            <person name="Tapia R."/>
            <person name="Gilna P."/>
            <person name="Schmutz J."/>
            <person name="Larimer F."/>
            <person name="Land M."/>
            <person name="Hauser L."/>
            <person name="Kyrpides N."/>
            <person name="Mikhailova N."/>
            <person name="Nealson K."/>
            <person name="Konstantinidis K."/>
            <person name="Klappenbach J."/>
            <person name="Tiedje J."/>
            <person name="Richardson P."/>
        </authorList>
    </citation>
    <scope>NUCLEOTIDE SEQUENCE [LARGE SCALE GENOMIC DNA]</scope>
    <source>
        <strain>MR-7</strain>
    </source>
</reference>
<name>ARGR_SHESR</name>
<protein>
    <recommendedName>
        <fullName evidence="1">Arginine repressor</fullName>
    </recommendedName>
</protein>
<evidence type="ECO:0000255" key="1">
    <source>
        <dbReference type="HAMAP-Rule" id="MF_00173"/>
    </source>
</evidence>
<proteinExistence type="inferred from homology"/>
<dbReference type="EMBL" id="CP000444">
    <property type="protein sequence ID" value="ABI41616.1"/>
    <property type="molecule type" value="Genomic_DNA"/>
</dbReference>
<dbReference type="SMR" id="Q0HZ39"/>
<dbReference type="KEGG" id="shm:Shewmr7_0613"/>
<dbReference type="HOGENOM" id="CLU_097103_2_0_6"/>
<dbReference type="UniPathway" id="UPA00068"/>
<dbReference type="GO" id="GO:0005737">
    <property type="term" value="C:cytoplasm"/>
    <property type="evidence" value="ECO:0007669"/>
    <property type="project" value="UniProtKB-SubCell"/>
</dbReference>
<dbReference type="GO" id="GO:0034618">
    <property type="term" value="F:arginine binding"/>
    <property type="evidence" value="ECO:0007669"/>
    <property type="project" value="InterPro"/>
</dbReference>
<dbReference type="GO" id="GO:0003677">
    <property type="term" value="F:DNA binding"/>
    <property type="evidence" value="ECO:0007669"/>
    <property type="project" value="UniProtKB-KW"/>
</dbReference>
<dbReference type="GO" id="GO:0003700">
    <property type="term" value="F:DNA-binding transcription factor activity"/>
    <property type="evidence" value="ECO:0007669"/>
    <property type="project" value="UniProtKB-UniRule"/>
</dbReference>
<dbReference type="GO" id="GO:0006526">
    <property type="term" value="P:L-arginine biosynthetic process"/>
    <property type="evidence" value="ECO:0007669"/>
    <property type="project" value="UniProtKB-UniPathway"/>
</dbReference>
<dbReference type="GO" id="GO:0051259">
    <property type="term" value="P:protein complex oligomerization"/>
    <property type="evidence" value="ECO:0007669"/>
    <property type="project" value="InterPro"/>
</dbReference>
<dbReference type="GO" id="GO:1900079">
    <property type="term" value="P:regulation of arginine biosynthetic process"/>
    <property type="evidence" value="ECO:0007669"/>
    <property type="project" value="UniProtKB-UniRule"/>
</dbReference>
<dbReference type="Gene3D" id="3.30.1360.40">
    <property type="match status" value="1"/>
</dbReference>
<dbReference type="Gene3D" id="1.10.10.10">
    <property type="entry name" value="Winged helix-like DNA-binding domain superfamily/Winged helix DNA-binding domain"/>
    <property type="match status" value="1"/>
</dbReference>
<dbReference type="HAMAP" id="MF_00173">
    <property type="entry name" value="Arg_repressor"/>
    <property type="match status" value="1"/>
</dbReference>
<dbReference type="InterPro" id="IPR001669">
    <property type="entry name" value="Arg_repress"/>
</dbReference>
<dbReference type="InterPro" id="IPR020899">
    <property type="entry name" value="Arg_repress_C"/>
</dbReference>
<dbReference type="InterPro" id="IPR036251">
    <property type="entry name" value="Arg_repress_C_sf"/>
</dbReference>
<dbReference type="InterPro" id="IPR020900">
    <property type="entry name" value="Arg_repress_DNA-bd"/>
</dbReference>
<dbReference type="InterPro" id="IPR036388">
    <property type="entry name" value="WH-like_DNA-bd_sf"/>
</dbReference>
<dbReference type="InterPro" id="IPR036390">
    <property type="entry name" value="WH_DNA-bd_sf"/>
</dbReference>
<dbReference type="NCBIfam" id="TIGR01529">
    <property type="entry name" value="argR_whole"/>
    <property type="match status" value="1"/>
</dbReference>
<dbReference type="NCBIfam" id="NF003457">
    <property type="entry name" value="PRK05066.1"/>
    <property type="match status" value="1"/>
</dbReference>
<dbReference type="PANTHER" id="PTHR34471">
    <property type="entry name" value="ARGININE REPRESSOR"/>
    <property type="match status" value="1"/>
</dbReference>
<dbReference type="PANTHER" id="PTHR34471:SF1">
    <property type="entry name" value="ARGININE REPRESSOR"/>
    <property type="match status" value="1"/>
</dbReference>
<dbReference type="Pfam" id="PF01316">
    <property type="entry name" value="Arg_repressor"/>
    <property type="match status" value="1"/>
</dbReference>
<dbReference type="Pfam" id="PF02863">
    <property type="entry name" value="Arg_repressor_C"/>
    <property type="match status" value="1"/>
</dbReference>
<dbReference type="PRINTS" id="PR01467">
    <property type="entry name" value="ARGREPRESSOR"/>
</dbReference>
<dbReference type="SUPFAM" id="SSF55252">
    <property type="entry name" value="C-terminal domain of arginine repressor"/>
    <property type="match status" value="1"/>
</dbReference>
<dbReference type="SUPFAM" id="SSF46785">
    <property type="entry name" value="Winged helix' DNA-binding domain"/>
    <property type="match status" value="1"/>
</dbReference>
<gene>
    <name evidence="1" type="primary">argR</name>
    <name type="ordered locus">Shewmr7_0613</name>
</gene>
<sequence length="156" mass="16939">MQTTKNQDDLVRIFKAILKEERFGSQSEIVAALQAEGFSNINQSKVSRMLSKFGAVRTRNAKQEMVYCLPAELGVPTAGSPLKNLVLDVDHNQAMIVVRTSPGAAQLIARLLDSIGKPEGILGTIAGDDTIFICPSSIQDIADTLETIKSLFNYAE</sequence>
<comment type="function">
    <text evidence="1">Regulates arginine biosynthesis genes.</text>
</comment>
<comment type="pathway">
    <text>Amino-acid biosynthesis; L-arginine biosynthesis [regulation].</text>
</comment>
<comment type="subcellular location">
    <subcellularLocation>
        <location evidence="1">Cytoplasm</location>
    </subcellularLocation>
</comment>
<comment type="similarity">
    <text evidence="1">Belongs to the ArgR family.</text>
</comment>